<comment type="function">
    <text evidence="1">Has flap endonuclease activity. During DNA replication, flap endonucleases cleave the 5'-overhanging flap structure that is generated by displacement synthesis when DNA polymerase encounters the 5'-end of a downstream Okazaki fragment.</text>
</comment>
<comment type="cofactor">
    <cofactor evidence="1">
        <name>Mg(2+)</name>
        <dbReference type="ChEBI" id="CHEBI:18420"/>
    </cofactor>
    <text evidence="1">Binds 2 Mg(2+) per subunit. Only one magnesium ion has a direct interaction with the protein, the other interactions are indirect.</text>
</comment>
<comment type="cofactor">
    <cofactor evidence="1">
        <name>K(+)</name>
        <dbReference type="ChEBI" id="CHEBI:29103"/>
    </cofactor>
    <text evidence="1">Binds 1 K(+) per subunit. The potassium ion strongly increases the affinity for DNA.</text>
</comment>
<comment type="similarity">
    <text evidence="1">Belongs to the Xni family.</text>
</comment>
<reference key="1">
    <citation type="journal article" date="2010" name="PLoS ONE">
        <title>Genome sequence of Cronobacter sakazakii BAA-894 and comparative genomic hybridization analysis with other Cronobacter species.</title>
        <authorList>
            <person name="Kucerova E."/>
            <person name="Clifton S.W."/>
            <person name="Xia X.Q."/>
            <person name="Long F."/>
            <person name="Porwollik S."/>
            <person name="Fulton L."/>
            <person name="Fronick C."/>
            <person name="Minx P."/>
            <person name="Kyung K."/>
            <person name="Warren W."/>
            <person name="Fulton R."/>
            <person name="Feng D."/>
            <person name="Wollam A."/>
            <person name="Shah N."/>
            <person name="Bhonagiri V."/>
            <person name="Nash W.E."/>
            <person name="Hallsworth-Pepin K."/>
            <person name="Wilson R.K."/>
            <person name="McClelland M."/>
            <person name="Forsythe S.J."/>
        </authorList>
    </citation>
    <scope>NUCLEOTIDE SEQUENCE [LARGE SCALE GENOMIC DNA]</scope>
    <source>
        <strain>ATCC BAA-894</strain>
    </source>
</reference>
<protein>
    <recommendedName>
        <fullName evidence="1">Flap endonuclease Xni</fullName>
        <shortName evidence="1">FEN</shortName>
        <ecNumber evidence="1">3.1.-.-</ecNumber>
    </recommendedName>
</protein>
<gene>
    <name evidence="1" type="primary">xni</name>
    <name evidence="1" type="synonym">ygdG</name>
    <name type="ordered locus">ESA_00506</name>
</gene>
<proteinExistence type="inferred from homology"/>
<sequence length="251" mass="27835">MPVHLLIVDALNLIRRIHAVQGTPCVDTCLHALEQLIGNSQPTHAVAVFDDEARAQGWRHQLLPDYKAGRPPMPDDLHQEMPALRDAFTRRGVPCWHVEGNEADDLAATLAVKVAAAGHEATIVSTDKGYCQLLRPEIRIRDYFQKRWLDAPFIESEFGVSPGQLADFWGLAGISSSKIPGVPGIGPKSATQLINDFGTLEALYERLDDVPDKWRKKLEAHRESAFVCRAVATLKTDLQLDGNLQQLRLHG</sequence>
<name>XNI_CROS8</name>
<organism>
    <name type="scientific">Cronobacter sakazakii (strain ATCC BAA-894)</name>
    <name type="common">Enterobacter sakazakii</name>
    <dbReference type="NCBI Taxonomy" id="290339"/>
    <lineage>
        <taxon>Bacteria</taxon>
        <taxon>Pseudomonadati</taxon>
        <taxon>Pseudomonadota</taxon>
        <taxon>Gammaproteobacteria</taxon>
        <taxon>Enterobacterales</taxon>
        <taxon>Enterobacteriaceae</taxon>
        <taxon>Cronobacter</taxon>
    </lineage>
</organism>
<keyword id="KW-0238">DNA-binding</keyword>
<keyword id="KW-0255">Endonuclease</keyword>
<keyword id="KW-0378">Hydrolase</keyword>
<keyword id="KW-0460">Magnesium</keyword>
<keyword id="KW-0479">Metal-binding</keyword>
<keyword id="KW-0540">Nuclease</keyword>
<keyword id="KW-0630">Potassium</keyword>
<keyword id="KW-1185">Reference proteome</keyword>
<evidence type="ECO:0000255" key="1">
    <source>
        <dbReference type="HAMAP-Rule" id="MF_01192"/>
    </source>
</evidence>
<dbReference type="EC" id="3.1.-.-" evidence="1"/>
<dbReference type="EMBL" id="CP000783">
    <property type="protein sequence ID" value="ABU75798.1"/>
    <property type="molecule type" value="Genomic_DNA"/>
</dbReference>
<dbReference type="RefSeq" id="WP_012123906.1">
    <property type="nucleotide sequence ID" value="NC_009778.1"/>
</dbReference>
<dbReference type="SMR" id="A7MR03"/>
<dbReference type="KEGG" id="esa:ESA_00506"/>
<dbReference type="PATRIC" id="fig|290339.8.peg.456"/>
<dbReference type="HOGENOM" id="CLU_004675_1_2_6"/>
<dbReference type="Proteomes" id="UP000000260">
    <property type="component" value="Chromosome"/>
</dbReference>
<dbReference type="GO" id="GO:0008409">
    <property type="term" value="F:5'-3' exonuclease activity"/>
    <property type="evidence" value="ECO:0007669"/>
    <property type="project" value="InterPro"/>
</dbReference>
<dbReference type="GO" id="GO:0017108">
    <property type="term" value="F:5'-flap endonuclease activity"/>
    <property type="evidence" value="ECO:0007669"/>
    <property type="project" value="UniProtKB-UniRule"/>
</dbReference>
<dbReference type="GO" id="GO:0003677">
    <property type="term" value="F:DNA binding"/>
    <property type="evidence" value="ECO:0007669"/>
    <property type="project" value="UniProtKB-UniRule"/>
</dbReference>
<dbReference type="GO" id="GO:0000287">
    <property type="term" value="F:magnesium ion binding"/>
    <property type="evidence" value="ECO:0007669"/>
    <property type="project" value="UniProtKB-UniRule"/>
</dbReference>
<dbReference type="GO" id="GO:0030955">
    <property type="term" value="F:potassium ion binding"/>
    <property type="evidence" value="ECO:0007669"/>
    <property type="project" value="UniProtKB-UniRule"/>
</dbReference>
<dbReference type="GO" id="GO:0033567">
    <property type="term" value="P:DNA replication, Okazaki fragment processing"/>
    <property type="evidence" value="ECO:0007669"/>
    <property type="project" value="UniProtKB-UniRule"/>
</dbReference>
<dbReference type="CDD" id="cd09898">
    <property type="entry name" value="H3TH_53EXO"/>
    <property type="match status" value="1"/>
</dbReference>
<dbReference type="CDD" id="cd09859">
    <property type="entry name" value="PIN_53EXO"/>
    <property type="match status" value="1"/>
</dbReference>
<dbReference type="FunFam" id="1.10.150.20:FF:000003">
    <property type="entry name" value="DNA polymerase I"/>
    <property type="match status" value="1"/>
</dbReference>
<dbReference type="FunFam" id="3.40.50.1010:FF:000011">
    <property type="entry name" value="Flap endonuclease Xni"/>
    <property type="match status" value="1"/>
</dbReference>
<dbReference type="Gene3D" id="1.10.150.20">
    <property type="entry name" value="5' to 3' exonuclease, C-terminal subdomain"/>
    <property type="match status" value="1"/>
</dbReference>
<dbReference type="Gene3D" id="3.40.50.1010">
    <property type="entry name" value="5'-nuclease"/>
    <property type="match status" value="1"/>
</dbReference>
<dbReference type="HAMAP" id="MF_01192">
    <property type="entry name" value="Xni"/>
    <property type="match status" value="1"/>
</dbReference>
<dbReference type="InterPro" id="IPR020046">
    <property type="entry name" value="5-3_exonucl_a-hlix_arch_N"/>
</dbReference>
<dbReference type="InterPro" id="IPR002421">
    <property type="entry name" value="5-3_exonuclease"/>
</dbReference>
<dbReference type="InterPro" id="IPR036279">
    <property type="entry name" value="5-3_exonuclease_C_sf"/>
</dbReference>
<dbReference type="InterPro" id="IPR020045">
    <property type="entry name" value="DNA_polI_H3TH"/>
</dbReference>
<dbReference type="InterPro" id="IPR038969">
    <property type="entry name" value="FEN"/>
</dbReference>
<dbReference type="InterPro" id="IPR008918">
    <property type="entry name" value="HhH2"/>
</dbReference>
<dbReference type="InterPro" id="IPR029060">
    <property type="entry name" value="PIN-like_dom_sf"/>
</dbReference>
<dbReference type="InterPro" id="IPR022895">
    <property type="entry name" value="Xni"/>
</dbReference>
<dbReference type="NCBIfam" id="NF007017">
    <property type="entry name" value="PRK09482.1"/>
    <property type="match status" value="1"/>
</dbReference>
<dbReference type="PANTHER" id="PTHR42646:SF2">
    <property type="entry name" value="5'-3' EXONUCLEASE FAMILY PROTEIN"/>
    <property type="match status" value="1"/>
</dbReference>
<dbReference type="PANTHER" id="PTHR42646">
    <property type="entry name" value="FLAP ENDONUCLEASE XNI"/>
    <property type="match status" value="1"/>
</dbReference>
<dbReference type="Pfam" id="PF01367">
    <property type="entry name" value="5_3_exonuc"/>
    <property type="match status" value="1"/>
</dbReference>
<dbReference type="Pfam" id="PF02739">
    <property type="entry name" value="5_3_exonuc_N"/>
    <property type="match status" value="1"/>
</dbReference>
<dbReference type="SMART" id="SM00475">
    <property type="entry name" value="53EXOc"/>
    <property type="match status" value="1"/>
</dbReference>
<dbReference type="SMART" id="SM00279">
    <property type="entry name" value="HhH2"/>
    <property type="match status" value="1"/>
</dbReference>
<dbReference type="SUPFAM" id="SSF47807">
    <property type="entry name" value="5' to 3' exonuclease, C-terminal subdomain"/>
    <property type="match status" value="1"/>
</dbReference>
<dbReference type="SUPFAM" id="SSF88723">
    <property type="entry name" value="PIN domain-like"/>
    <property type="match status" value="1"/>
</dbReference>
<feature type="chain" id="PRO_1000065880" description="Flap endonuclease Xni">
    <location>
        <begin position="1"/>
        <end position="251"/>
    </location>
</feature>
<feature type="domain" description="5'-3' exonuclease" evidence="1">
    <location>
        <begin position="160"/>
        <end position="249"/>
    </location>
</feature>
<feature type="region of interest" description="Interaction with DNA" evidence="1">
    <location>
        <begin position="184"/>
        <end position="189"/>
    </location>
</feature>
<feature type="binding site" evidence="1">
    <location>
        <position position="104"/>
    </location>
    <ligand>
        <name>Mg(2+)</name>
        <dbReference type="ChEBI" id="CHEBI:18420"/>
    </ligand>
</feature>
<feature type="binding site" evidence="1">
    <location>
        <position position="171"/>
    </location>
    <ligand>
        <name>K(+)</name>
        <dbReference type="ChEBI" id="CHEBI:29103"/>
    </ligand>
</feature>
<feature type="binding site" evidence="1">
    <location>
        <position position="172"/>
    </location>
    <ligand>
        <name>K(+)</name>
        <dbReference type="ChEBI" id="CHEBI:29103"/>
    </ligand>
</feature>
<feature type="binding site" evidence="1">
    <location>
        <position position="180"/>
    </location>
    <ligand>
        <name>K(+)</name>
        <dbReference type="ChEBI" id="CHEBI:29103"/>
    </ligand>
</feature>
<feature type="binding site" evidence="1">
    <location>
        <position position="182"/>
    </location>
    <ligand>
        <name>K(+)</name>
        <dbReference type="ChEBI" id="CHEBI:29103"/>
    </ligand>
</feature>
<feature type="binding site" evidence="1">
    <location>
        <position position="185"/>
    </location>
    <ligand>
        <name>K(+)</name>
        <dbReference type="ChEBI" id="CHEBI:29103"/>
    </ligand>
</feature>
<accession>A7MR03</accession>